<protein>
    <recommendedName>
        <fullName evidence="1">Succinylornithine transaminase</fullName>
        <ecNumber evidence="1">2.6.1.81</ecNumber>
    </recommendedName>
    <alternativeName>
        <fullName evidence="1">Succinylornithine aminotransferase</fullName>
    </alternativeName>
</protein>
<comment type="function">
    <text evidence="1">Catalyzes the transamination of N(2)-succinylornithine and alpha-ketoglutarate into N(2)-succinylglutamate semialdehyde and glutamate. Can also act as an acetylornithine aminotransferase.</text>
</comment>
<comment type="catalytic activity">
    <reaction evidence="1">
        <text>N(2)-succinyl-L-ornithine + 2-oxoglutarate = N-succinyl-L-glutamate 5-semialdehyde + L-glutamate</text>
        <dbReference type="Rhea" id="RHEA:16953"/>
        <dbReference type="ChEBI" id="CHEBI:16810"/>
        <dbReference type="ChEBI" id="CHEBI:29985"/>
        <dbReference type="ChEBI" id="CHEBI:58514"/>
        <dbReference type="ChEBI" id="CHEBI:58520"/>
        <dbReference type="EC" id="2.6.1.81"/>
    </reaction>
</comment>
<comment type="cofactor">
    <cofactor evidence="1">
        <name>pyridoxal 5'-phosphate</name>
        <dbReference type="ChEBI" id="CHEBI:597326"/>
    </cofactor>
</comment>
<comment type="pathway">
    <text evidence="1">Amino-acid degradation; L-arginine degradation via AST pathway; L-glutamate and succinate from L-arginine: step 3/5.</text>
</comment>
<comment type="similarity">
    <text evidence="1">Belongs to the class-III pyridoxal-phosphate-dependent aminotransferase family. AstC subfamily.</text>
</comment>
<evidence type="ECO:0000255" key="1">
    <source>
        <dbReference type="HAMAP-Rule" id="MF_01173"/>
    </source>
</evidence>
<organism>
    <name type="scientific">Escherichia coli O17:K52:H18 (strain UMN026 / ExPEC)</name>
    <dbReference type="NCBI Taxonomy" id="585056"/>
    <lineage>
        <taxon>Bacteria</taxon>
        <taxon>Pseudomonadati</taxon>
        <taxon>Pseudomonadota</taxon>
        <taxon>Gammaproteobacteria</taxon>
        <taxon>Enterobacterales</taxon>
        <taxon>Enterobacteriaceae</taxon>
        <taxon>Escherichia</taxon>
    </lineage>
</organism>
<proteinExistence type="inferred from homology"/>
<sequence length="406" mass="43530">MSQPITRENFDEWMIPVYAPAPFIPVRGEGSRLWDQQGKEYIDFAGGIAVNALGHAHPELREALNEQASKFWHTGNGYTNEPVLRLAKKLIDATFADRVFFCNSGAEANEAALKLARKFAHDRYGSHKSGIVAFKNAFHGRTLFTVSAGGQPAYSQDFAPLPPDIRHAAYNDINSASALIDDSTCAVIVEPIQGEGGVVPASNAFLHGLRELCDRHNALLIFDEVQTGVGRTGELYAYMHYGVTPDLLTTAKALGGGFPVGALLATEECASVMTVGTHGTTYGGNPLASAVAGKVLDLINTPEMLNGVKQRHDWFVERLNTVNHRCGLFSEVRGLGLLIGCVLNADYAGQAKQISQEAAKAGVMVLIAGGNVVRFAPALNVSEEEVTTGLDRFAAACDHFVSRGSS</sequence>
<feature type="chain" id="PRO_1000164385" description="Succinylornithine transaminase">
    <location>
        <begin position="1"/>
        <end position="406"/>
    </location>
</feature>
<feature type="modified residue" description="N6-(pyridoxal phosphate)lysine" evidence="1">
    <location>
        <position position="252"/>
    </location>
</feature>
<accession>B7N584</accession>
<reference key="1">
    <citation type="journal article" date="2009" name="PLoS Genet.">
        <title>Organised genome dynamics in the Escherichia coli species results in highly diverse adaptive paths.</title>
        <authorList>
            <person name="Touchon M."/>
            <person name="Hoede C."/>
            <person name="Tenaillon O."/>
            <person name="Barbe V."/>
            <person name="Baeriswyl S."/>
            <person name="Bidet P."/>
            <person name="Bingen E."/>
            <person name="Bonacorsi S."/>
            <person name="Bouchier C."/>
            <person name="Bouvet O."/>
            <person name="Calteau A."/>
            <person name="Chiapello H."/>
            <person name="Clermont O."/>
            <person name="Cruveiller S."/>
            <person name="Danchin A."/>
            <person name="Diard M."/>
            <person name="Dossat C."/>
            <person name="Karoui M.E."/>
            <person name="Frapy E."/>
            <person name="Garry L."/>
            <person name="Ghigo J.M."/>
            <person name="Gilles A.M."/>
            <person name="Johnson J."/>
            <person name="Le Bouguenec C."/>
            <person name="Lescat M."/>
            <person name="Mangenot S."/>
            <person name="Martinez-Jehanne V."/>
            <person name="Matic I."/>
            <person name="Nassif X."/>
            <person name="Oztas S."/>
            <person name="Petit M.A."/>
            <person name="Pichon C."/>
            <person name="Rouy Z."/>
            <person name="Ruf C.S."/>
            <person name="Schneider D."/>
            <person name="Tourret J."/>
            <person name="Vacherie B."/>
            <person name="Vallenet D."/>
            <person name="Medigue C."/>
            <person name="Rocha E.P.C."/>
            <person name="Denamur E."/>
        </authorList>
    </citation>
    <scope>NUCLEOTIDE SEQUENCE [LARGE SCALE GENOMIC DNA]</scope>
    <source>
        <strain>UMN026 / ExPEC</strain>
    </source>
</reference>
<keyword id="KW-0032">Aminotransferase</keyword>
<keyword id="KW-0056">Arginine metabolism</keyword>
<keyword id="KW-0663">Pyridoxal phosphate</keyword>
<keyword id="KW-0808">Transferase</keyword>
<name>ASTC_ECOLU</name>
<gene>
    <name evidence="1" type="primary">astC</name>
    <name evidence="1" type="synonym">argM</name>
    <name type="ordered locus">ECUMN_2037</name>
</gene>
<dbReference type="EC" id="2.6.1.81" evidence="1"/>
<dbReference type="EMBL" id="CU928163">
    <property type="protein sequence ID" value="CAR13233.1"/>
    <property type="molecule type" value="Genomic_DNA"/>
</dbReference>
<dbReference type="RefSeq" id="WP_000082001.1">
    <property type="nucleotide sequence ID" value="NC_011751.1"/>
</dbReference>
<dbReference type="RefSeq" id="YP_002412765.1">
    <property type="nucleotide sequence ID" value="NC_011751.1"/>
</dbReference>
<dbReference type="SMR" id="B7N584"/>
<dbReference type="STRING" id="585056.ECUMN_2037"/>
<dbReference type="KEGG" id="eum:ECUMN_2037"/>
<dbReference type="PATRIC" id="fig|585056.7.peg.2223"/>
<dbReference type="HOGENOM" id="CLU_016922_10_1_6"/>
<dbReference type="UniPathway" id="UPA00185">
    <property type="reaction ID" value="UER00281"/>
</dbReference>
<dbReference type="Proteomes" id="UP000007097">
    <property type="component" value="Chromosome"/>
</dbReference>
<dbReference type="GO" id="GO:0042802">
    <property type="term" value="F:identical protein binding"/>
    <property type="evidence" value="ECO:0007669"/>
    <property type="project" value="TreeGrafter"/>
</dbReference>
<dbReference type="GO" id="GO:0030170">
    <property type="term" value="F:pyridoxal phosphate binding"/>
    <property type="evidence" value="ECO:0007669"/>
    <property type="project" value="UniProtKB-UniRule"/>
</dbReference>
<dbReference type="GO" id="GO:0043825">
    <property type="term" value="F:succinylornithine transaminase activity"/>
    <property type="evidence" value="ECO:0007669"/>
    <property type="project" value="UniProtKB-EC"/>
</dbReference>
<dbReference type="GO" id="GO:1901607">
    <property type="term" value="P:alpha-amino acid biosynthetic process"/>
    <property type="evidence" value="ECO:0007669"/>
    <property type="project" value="UniProtKB-ARBA"/>
</dbReference>
<dbReference type="GO" id="GO:0019544">
    <property type="term" value="P:arginine catabolic process to glutamate"/>
    <property type="evidence" value="ECO:0007669"/>
    <property type="project" value="UniProtKB-UniRule"/>
</dbReference>
<dbReference type="GO" id="GO:0019545">
    <property type="term" value="P:arginine catabolic process to succinate"/>
    <property type="evidence" value="ECO:0007669"/>
    <property type="project" value="UniProtKB-UniRule"/>
</dbReference>
<dbReference type="GO" id="GO:0006593">
    <property type="term" value="P:ornithine catabolic process"/>
    <property type="evidence" value="ECO:0007669"/>
    <property type="project" value="InterPro"/>
</dbReference>
<dbReference type="CDD" id="cd00610">
    <property type="entry name" value="OAT_like"/>
    <property type="match status" value="1"/>
</dbReference>
<dbReference type="FunFam" id="3.40.640.10:FF:000004">
    <property type="entry name" value="Acetylornithine aminotransferase"/>
    <property type="match status" value="1"/>
</dbReference>
<dbReference type="FunFam" id="3.90.1150.10:FF:000009">
    <property type="entry name" value="Succinylornithine transaminase"/>
    <property type="match status" value="1"/>
</dbReference>
<dbReference type="Gene3D" id="3.90.1150.10">
    <property type="entry name" value="Aspartate Aminotransferase, domain 1"/>
    <property type="match status" value="1"/>
</dbReference>
<dbReference type="Gene3D" id="3.40.640.10">
    <property type="entry name" value="Type I PLP-dependent aspartate aminotransferase-like (Major domain)"/>
    <property type="match status" value="1"/>
</dbReference>
<dbReference type="HAMAP" id="MF_01107">
    <property type="entry name" value="ArgD_aminotrans_3"/>
    <property type="match status" value="1"/>
</dbReference>
<dbReference type="HAMAP" id="MF_01173">
    <property type="entry name" value="AstC_aminotrans_3"/>
    <property type="match status" value="1"/>
</dbReference>
<dbReference type="InterPro" id="IPR017652">
    <property type="entry name" value="Ac/SucOrn_transaminase_bac"/>
</dbReference>
<dbReference type="InterPro" id="IPR004636">
    <property type="entry name" value="AcOrn/SuccOrn_fam"/>
</dbReference>
<dbReference type="InterPro" id="IPR005814">
    <property type="entry name" value="Aminotrans_3"/>
</dbReference>
<dbReference type="InterPro" id="IPR049704">
    <property type="entry name" value="Aminotrans_3_PPA_site"/>
</dbReference>
<dbReference type="InterPro" id="IPR050103">
    <property type="entry name" value="Class-III_PLP-dep_AT"/>
</dbReference>
<dbReference type="InterPro" id="IPR015424">
    <property type="entry name" value="PyrdxlP-dep_Trfase"/>
</dbReference>
<dbReference type="InterPro" id="IPR015421">
    <property type="entry name" value="PyrdxlP-dep_Trfase_major"/>
</dbReference>
<dbReference type="InterPro" id="IPR015422">
    <property type="entry name" value="PyrdxlP-dep_Trfase_small"/>
</dbReference>
<dbReference type="InterPro" id="IPR026330">
    <property type="entry name" value="SOAT"/>
</dbReference>
<dbReference type="NCBIfam" id="TIGR03246">
    <property type="entry name" value="arg_catab_astC"/>
    <property type="match status" value="1"/>
</dbReference>
<dbReference type="NCBIfam" id="TIGR00707">
    <property type="entry name" value="argD"/>
    <property type="match status" value="1"/>
</dbReference>
<dbReference type="NCBIfam" id="NF002325">
    <property type="entry name" value="PRK01278.1"/>
    <property type="match status" value="1"/>
</dbReference>
<dbReference type="NCBIfam" id="NF003468">
    <property type="entry name" value="PRK05093.1"/>
    <property type="match status" value="1"/>
</dbReference>
<dbReference type="NCBIfam" id="NF009047">
    <property type="entry name" value="PRK12381.1"/>
    <property type="match status" value="1"/>
</dbReference>
<dbReference type="PANTHER" id="PTHR11986">
    <property type="entry name" value="AMINOTRANSFERASE CLASS III"/>
    <property type="match status" value="1"/>
</dbReference>
<dbReference type="PANTHER" id="PTHR11986:SF113">
    <property type="entry name" value="SUCCINYLORNITHINE TRANSAMINASE"/>
    <property type="match status" value="1"/>
</dbReference>
<dbReference type="Pfam" id="PF00202">
    <property type="entry name" value="Aminotran_3"/>
    <property type="match status" value="1"/>
</dbReference>
<dbReference type="PIRSF" id="PIRSF000521">
    <property type="entry name" value="Transaminase_4ab_Lys_Orn"/>
    <property type="match status" value="1"/>
</dbReference>
<dbReference type="SUPFAM" id="SSF53383">
    <property type="entry name" value="PLP-dependent transferases"/>
    <property type="match status" value="1"/>
</dbReference>
<dbReference type="PROSITE" id="PS00600">
    <property type="entry name" value="AA_TRANSFER_CLASS_3"/>
    <property type="match status" value="1"/>
</dbReference>